<comment type="function">
    <text evidence="1">Catalyzes the reversible reaction in which hydroxymethyl group from 5,10-methylenetetrahydrofolate is transferred onto alpha-ketoisovalerate to form ketopantoate.</text>
</comment>
<comment type="catalytic activity">
    <reaction evidence="1">
        <text>3-methyl-2-oxobutanoate + (6R)-5,10-methylene-5,6,7,8-tetrahydrofolate + H2O = 2-dehydropantoate + (6S)-5,6,7,8-tetrahydrofolate</text>
        <dbReference type="Rhea" id="RHEA:11824"/>
        <dbReference type="ChEBI" id="CHEBI:11561"/>
        <dbReference type="ChEBI" id="CHEBI:11851"/>
        <dbReference type="ChEBI" id="CHEBI:15377"/>
        <dbReference type="ChEBI" id="CHEBI:15636"/>
        <dbReference type="ChEBI" id="CHEBI:57453"/>
        <dbReference type="EC" id="2.1.2.11"/>
    </reaction>
</comment>
<comment type="cofactor">
    <cofactor evidence="1">
        <name>Mg(2+)</name>
        <dbReference type="ChEBI" id="CHEBI:18420"/>
    </cofactor>
    <text evidence="1">Binds 1 Mg(2+) ion per subunit.</text>
</comment>
<comment type="pathway">
    <text evidence="1">Cofactor biosynthesis; (R)-pantothenate biosynthesis; (R)-pantoate from 3-methyl-2-oxobutanoate: step 1/2.</text>
</comment>
<comment type="subunit">
    <text evidence="1">Homodecamer; pentamer of dimers.</text>
</comment>
<comment type="subcellular location">
    <subcellularLocation>
        <location evidence="1">Cytoplasm</location>
    </subcellularLocation>
</comment>
<comment type="similarity">
    <text evidence="1">Belongs to the PanB family.</text>
</comment>
<reference key="1">
    <citation type="journal article" date="2005" name="J. Bacteriol.">
        <title>Insights on evolution of virulence and resistance from the complete genome analysis of an early methicillin-resistant Staphylococcus aureus strain and a biofilm-producing methicillin-resistant Staphylococcus epidermidis strain.</title>
        <authorList>
            <person name="Gill S.R."/>
            <person name="Fouts D.E."/>
            <person name="Archer G.L."/>
            <person name="Mongodin E.F."/>
            <person name="DeBoy R.T."/>
            <person name="Ravel J."/>
            <person name="Paulsen I.T."/>
            <person name="Kolonay J.F."/>
            <person name="Brinkac L.M."/>
            <person name="Beanan M.J."/>
            <person name="Dodson R.J."/>
            <person name="Daugherty S.C."/>
            <person name="Madupu R."/>
            <person name="Angiuoli S.V."/>
            <person name="Durkin A.S."/>
            <person name="Haft D.H."/>
            <person name="Vamathevan J.J."/>
            <person name="Khouri H."/>
            <person name="Utterback T.R."/>
            <person name="Lee C."/>
            <person name="Dimitrov G."/>
            <person name="Jiang L."/>
            <person name="Qin H."/>
            <person name="Weidman J."/>
            <person name="Tran K."/>
            <person name="Kang K.H."/>
            <person name="Hance I.R."/>
            <person name="Nelson K.E."/>
            <person name="Fraser C.M."/>
        </authorList>
    </citation>
    <scope>NUCLEOTIDE SEQUENCE [LARGE SCALE GENOMIC DNA]</scope>
    <source>
        <strain>ATCC 35984 / DSM 28319 / BCRC 17069 / CCUG 31568 / BM 3577 / RP62A</strain>
    </source>
</reference>
<sequence length="272" mass="29626">MKTLNHLNKMKASQQKISMVTAYDYPSAKQAQQAEIDMILVGDSLGMTVLGYDSTVQVTLNDMIHHGKAVKRGASDTFIVVDMPIGTVGLSDEEDLKNALKLYQNTNANAVKVEGAHLTSFIQKATKMGIPVVSHLGLTPQSVGVMGYKLQGDTKTAAMQLIKDAKAMETAGAVVLVLEAIPSDLAREISQQLTIPVIGIGAGKDTDGQVLVYHDMLNYGVDRHAKFVKQFADFSSGIDGLRQYNEEVKAGTFPSENHTYKKRIMDEVEQHD</sequence>
<proteinExistence type="inferred from homology"/>
<dbReference type="EC" id="2.1.2.11" evidence="1"/>
<dbReference type="EMBL" id="CP000029">
    <property type="protein sequence ID" value="AAW53067.1"/>
    <property type="molecule type" value="Genomic_DNA"/>
</dbReference>
<dbReference type="RefSeq" id="WP_001830671.1">
    <property type="nucleotide sequence ID" value="NC_002976.3"/>
</dbReference>
<dbReference type="SMR" id="Q5HL35"/>
<dbReference type="STRING" id="176279.SERP2152"/>
<dbReference type="GeneID" id="50017781"/>
<dbReference type="KEGG" id="ser:SERP2152"/>
<dbReference type="eggNOG" id="COG0413">
    <property type="taxonomic scope" value="Bacteria"/>
</dbReference>
<dbReference type="HOGENOM" id="CLU_036645_1_0_9"/>
<dbReference type="UniPathway" id="UPA00028">
    <property type="reaction ID" value="UER00003"/>
</dbReference>
<dbReference type="Proteomes" id="UP000000531">
    <property type="component" value="Chromosome"/>
</dbReference>
<dbReference type="GO" id="GO:0005737">
    <property type="term" value="C:cytoplasm"/>
    <property type="evidence" value="ECO:0007669"/>
    <property type="project" value="UniProtKB-SubCell"/>
</dbReference>
<dbReference type="GO" id="GO:0003864">
    <property type="term" value="F:3-methyl-2-oxobutanoate hydroxymethyltransferase activity"/>
    <property type="evidence" value="ECO:0007669"/>
    <property type="project" value="UniProtKB-UniRule"/>
</dbReference>
<dbReference type="GO" id="GO:0000287">
    <property type="term" value="F:magnesium ion binding"/>
    <property type="evidence" value="ECO:0007669"/>
    <property type="project" value="TreeGrafter"/>
</dbReference>
<dbReference type="GO" id="GO:0015940">
    <property type="term" value="P:pantothenate biosynthetic process"/>
    <property type="evidence" value="ECO:0007669"/>
    <property type="project" value="UniProtKB-UniRule"/>
</dbReference>
<dbReference type="CDD" id="cd06557">
    <property type="entry name" value="KPHMT-like"/>
    <property type="match status" value="1"/>
</dbReference>
<dbReference type="FunFam" id="3.20.20.60:FF:000003">
    <property type="entry name" value="3-methyl-2-oxobutanoate hydroxymethyltransferase"/>
    <property type="match status" value="1"/>
</dbReference>
<dbReference type="Gene3D" id="3.20.20.60">
    <property type="entry name" value="Phosphoenolpyruvate-binding domains"/>
    <property type="match status" value="1"/>
</dbReference>
<dbReference type="HAMAP" id="MF_00156">
    <property type="entry name" value="PanB"/>
    <property type="match status" value="1"/>
</dbReference>
<dbReference type="InterPro" id="IPR003700">
    <property type="entry name" value="Pantoate_hydroxy_MeTrfase"/>
</dbReference>
<dbReference type="InterPro" id="IPR015813">
    <property type="entry name" value="Pyrv/PenolPyrv_kinase-like_dom"/>
</dbReference>
<dbReference type="InterPro" id="IPR040442">
    <property type="entry name" value="Pyrv_kinase-like_dom_sf"/>
</dbReference>
<dbReference type="NCBIfam" id="TIGR00222">
    <property type="entry name" value="panB"/>
    <property type="match status" value="1"/>
</dbReference>
<dbReference type="NCBIfam" id="NF001452">
    <property type="entry name" value="PRK00311.1"/>
    <property type="match status" value="1"/>
</dbReference>
<dbReference type="PANTHER" id="PTHR20881">
    <property type="entry name" value="3-METHYL-2-OXOBUTANOATE HYDROXYMETHYLTRANSFERASE"/>
    <property type="match status" value="1"/>
</dbReference>
<dbReference type="PANTHER" id="PTHR20881:SF0">
    <property type="entry name" value="3-METHYL-2-OXOBUTANOATE HYDROXYMETHYLTRANSFERASE"/>
    <property type="match status" value="1"/>
</dbReference>
<dbReference type="Pfam" id="PF02548">
    <property type="entry name" value="Pantoate_transf"/>
    <property type="match status" value="1"/>
</dbReference>
<dbReference type="PIRSF" id="PIRSF000388">
    <property type="entry name" value="Pantoate_hydroxy_MeTrfase"/>
    <property type="match status" value="1"/>
</dbReference>
<dbReference type="SUPFAM" id="SSF51621">
    <property type="entry name" value="Phosphoenolpyruvate/pyruvate domain"/>
    <property type="match status" value="1"/>
</dbReference>
<gene>
    <name evidence="1" type="primary">panB</name>
    <name type="ordered locus">SERP2152</name>
</gene>
<evidence type="ECO:0000255" key="1">
    <source>
        <dbReference type="HAMAP-Rule" id="MF_00156"/>
    </source>
</evidence>
<name>PANB_STAEQ</name>
<organism>
    <name type="scientific">Staphylococcus epidermidis (strain ATCC 35984 / DSM 28319 / BCRC 17069 / CCUG 31568 / BM 3577 / RP62A)</name>
    <dbReference type="NCBI Taxonomy" id="176279"/>
    <lineage>
        <taxon>Bacteria</taxon>
        <taxon>Bacillati</taxon>
        <taxon>Bacillota</taxon>
        <taxon>Bacilli</taxon>
        <taxon>Bacillales</taxon>
        <taxon>Staphylococcaceae</taxon>
        <taxon>Staphylococcus</taxon>
    </lineage>
</organism>
<protein>
    <recommendedName>
        <fullName evidence="1">3-methyl-2-oxobutanoate hydroxymethyltransferase</fullName>
        <ecNumber evidence="1">2.1.2.11</ecNumber>
    </recommendedName>
    <alternativeName>
        <fullName evidence="1">Ketopantoate hydroxymethyltransferase</fullName>
        <shortName evidence="1">KPHMT</shortName>
    </alternativeName>
</protein>
<feature type="chain" id="PRO_0000184895" description="3-methyl-2-oxobutanoate hydroxymethyltransferase">
    <location>
        <begin position="1"/>
        <end position="272"/>
    </location>
</feature>
<feature type="active site" description="Proton acceptor" evidence="1">
    <location>
        <position position="179"/>
    </location>
</feature>
<feature type="binding site" evidence="1">
    <location>
        <begin position="43"/>
        <end position="44"/>
    </location>
    <ligand>
        <name>3-methyl-2-oxobutanoate</name>
        <dbReference type="ChEBI" id="CHEBI:11851"/>
    </ligand>
</feature>
<feature type="binding site" evidence="1">
    <location>
        <position position="43"/>
    </location>
    <ligand>
        <name>Mg(2+)</name>
        <dbReference type="ChEBI" id="CHEBI:18420"/>
    </ligand>
</feature>
<feature type="binding site" evidence="1">
    <location>
        <position position="82"/>
    </location>
    <ligand>
        <name>3-methyl-2-oxobutanoate</name>
        <dbReference type="ChEBI" id="CHEBI:11851"/>
    </ligand>
</feature>
<feature type="binding site" evidence="1">
    <location>
        <position position="82"/>
    </location>
    <ligand>
        <name>Mg(2+)</name>
        <dbReference type="ChEBI" id="CHEBI:18420"/>
    </ligand>
</feature>
<feature type="binding site" evidence="1">
    <location>
        <position position="112"/>
    </location>
    <ligand>
        <name>3-methyl-2-oxobutanoate</name>
        <dbReference type="ChEBI" id="CHEBI:11851"/>
    </ligand>
</feature>
<feature type="binding site" evidence="1">
    <location>
        <position position="114"/>
    </location>
    <ligand>
        <name>Mg(2+)</name>
        <dbReference type="ChEBI" id="CHEBI:18420"/>
    </ligand>
</feature>
<accession>Q5HL35</accession>
<keyword id="KW-0963">Cytoplasm</keyword>
<keyword id="KW-0460">Magnesium</keyword>
<keyword id="KW-0479">Metal-binding</keyword>
<keyword id="KW-0566">Pantothenate biosynthesis</keyword>
<keyword id="KW-1185">Reference proteome</keyword>
<keyword id="KW-0808">Transferase</keyword>